<comment type="sequence caution" evidence="3">
    <conflict type="erroneous gene model prediction">
        <sequence resource="EMBL-CDS" id="AAB70027"/>
    </conflict>
</comment>
<gene>
    <name type="ordered locus">At3g44800</name>
    <name type="ORF">T32N15.3</name>
</gene>
<accession>F4J4A1</accession>
<accession>O22233</accession>
<name>MCC14_ARATH</name>
<proteinExistence type="predicted"/>
<keyword id="KW-0175">Coiled coil</keyword>
<keyword id="KW-1185">Reference proteome</keyword>
<protein>
    <recommendedName>
        <fullName>MATH domain and coiled-coil domain-containing protein At3g44800</fullName>
    </recommendedName>
    <alternativeName>
        <fullName>RTM3-like protein At3g44800</fullName>
    </alternativeName>
</protein>
<sequence>MGYEKFTWVIKNFSSLQSEYIKSDIFVIGGCKWCLLAYPNGKQNASYLSLYLDGPTLKTLPCGCRRRIRFRLTVVNQLSENLSRRGEGKRWFDKKLPLCGYEEVLLLTKLNAKHGGFLVNNEVKIVAEVDVLEVIGKLDVSKESQEVIKPRKRMRLYGDGGAVSSHLHKETSSVDVNGFQVLPSQAESVKRIFERHPYMALEFRAKNQQLRASCINVLLSLIKTLCQSLQDISIDDLGQTEQVLTFLQNSGFKVDWLERKLEEVKEKKIQEHIGKSRMQGLEEDLKVFKKKCSDIEALLEKEKEELKGLKQKCSDIEALLEKEKGKVLAAAARTPLTFDDIL</sequence>
<reference key="1">
    <citation type="journal article" date="2000" name="Nature">
        <title>Sequence and analysis of chromosome 3 of the plant Arabidopsis thaliana.</title>
        <authorList>
            <person name="Salanoubat M."/>
            <person name="Lemcke K."/>
            <person name="Rieger M."/>
            <person name="Ansorge W."/>
            <person name="Unseld M."/>
            <person name="Fartmann B."/>
            <person name="Valle G."/>
            <person name="Bloecker H."/>
            <person name="Perez-Alonso M."/>
            <person name="Obermaier B."/>
            <person name="Delseny M."/>
            <person name="Boutry M."/>
            <person name="Grivell L.A."/>
            <person name="Mache R."/>
            <person name="Puigdomenech P."/>
            <person name="De Simone V."/>
            <person name="Choisne N."/>
            <person name="Artiguenave F."/>
            <person name="Robert C."/>
            <person name="Brottier P."/>
            <person name="Wincker P."/>
            <person name="Cattolico L."/>
            <person name="Weissenbach J."/>
            <person name="Saurin W."/>
            <person name="Quetier F."/>
            <person name="Schaefer M."/>
            <person name="Mueller-Auer S."/>
            <person name="Gabel C."/>
            <person name="Fuchs M."/>
            <person name="Benes V."/>
            <person name="Wurmbach E."/>
            <person name="Drzonek H."/>
            <person name="Erfle H."/>
            <person name="Jordan N."/>
            <person name="Bangert S."/>
            <person name="Wiedelmann R."/>
            <person name="Kranz H."/>
            <person name="Voss H."/>
            <person name="Holland R."/>
            <person name="Brandt P."/>
            <person name="Nyakatura G."/>
            <person name="Vezzi A."/>
            <person name="D'Angelo M."/>
            <person name="Pallavicini A."/>
            <person name="Toppo S."/>
            <person name="Simionati B."/>
            <person name="Conrad A."/>
            <person name="Hornischer K."/>
            <person name="Kauer G."/>
            <person name="Loehnert T.-H."/>
            <person name="Nordsiek G."/>
            <person name="Reichelt J."/>
            <person name="Scharfe M."/>
            <person name="Schoen O."/>
            <person name="Bargues M."/>
            <person name="Terol J."/>
            <person name="Climent J."/>
            <person name="Navarro P."/>
            <person name="Collado C."/>
            <person name="Perez-Perez A."/>
            <person name="Ottenwaelder B."/>
            <person name="Duchemin D."/>
            <person name="Cooke R."/>
            <person name="Laudie M."/>
            <person name="Berger-Llauro C."/>
            <person name="Purnelle B."/>
            <person name="Masuy D."/>
            <person name="de Haan M."/>
            <person name="Maarse A.C."/>
            <person name="Alcaraz J.-P."/>
            <person name="Cottet A."/>
            <person name="Casacuberta E."/>
            <person name="Monfort A."/>
            <person name="Argiriou A."/>
            <person name="Flores M."/>
            <person name="Liguori R."/>
            <person name="Vitale D."/>
            <person name="Mannhaupt G."/>
            <person name="Haase D."/>
            <person name="Schoof H."/>
            <person name="Rudd S."/>
            <person name="Zaccaria P."/>
            <person name="Mewes H.-W."/>
            <person name="Mayer K.F.X."/>
            <person name="Kaul S."/>
            <person name="Town C.D."/>
            <person name="Koo H.L."/>
            <person name="Tallon L.J."/>
            <person name="Jenkins J."/>
            <person name="Rooney T."/>
            <person name="Rizzo M."/>
            <person name="Walts A."/>
            <person name="Utterback T."/>
            <person name="Fujii C.Y."/>
            <person name="Shea T.P."/>
            <person name="Creasy T.H."/>
            <person name="Haas B."/>
            <person name="Maiti R."/>
            <person name="Wu D."/>
            <person name="Peterson J."/>
            <person name="Van Aken S."/>
            <person name="Pai G."/>
            <person name="Militscher J."/>
            <person name="Sellers P."/>
            <person name="Gill J.E."/>
            <person name="Feldblyum T.V."/>
            <person name="Preuss D."/>
            <person name="Lin X."/>
            <person name="Nierman W.C."/>
            <person name="Salzberg S.L."/>
            <person name="White O."/>
            <person name="Venter J.C."/>
            <person name="Fraser C.M."/>
            <person name="Kaneko T."/>
            <person name="Nakamura Y."/>
            <person name="Sato S."/>
            <person name="Kato T."/>
            <person name="Asamizu E."/>
            <person name="Sasamoto S."/>
            <person name="Kimura T."/>
            <person name="Idesawa K."/>
            <person name="Kawashima K."/>
            <person name="Kishida Y."/>
            <person name="Kiyokawa C."/>
            <person name="Kohara M."/>
            <person name="Matsumoto M."/>
            <person name="Matsuno A."/>
            <person name="Muraki A."/>
            <person name="Nakayama S."/>
            <person name="Nakazaki N."/>
            <person name="Shinpo S."/>
            <person name="Takeuchi C."/>
            <person name="Wada T."/>
            <person name="Watanabe A."/>
            <person name="Yamada M."/>
            <person name="Yasuda M."/>
            <person name="Tabata S."/>
        </authorList>
    </citation>
    <scope>NUCLEOTIDE SEQUENCE [LARGE SCALE GENOMIC DNA]</scope>
    <source>
        <strain>cv. Columbia</strain>
    </source>
</reference>
<reference key="2">
    <citation type="journal article" date="2017" name="Plant J.">
        <title>Araport11: a complete reannotation of the Arabidopsis thaliana reference genome.</title>
        <authorList>
            <person name="Cheng C.Y."/>
            <person name="Krishnakumar V."/>
            <person name="Chan A.P."/>
            <person name="Thibaud-Nissen F."/>
            <person name="Schobel S."/>
            <person name="Town C.D."/>
        </authorList>
    </citation>
    <scope>GENOME REANNOTATION</scope>
    <source>
        <strain>cv. Columbia</strain>
    </source>
</reference>
<reference key="3">
    <citation type="journal article" date="2010" name="Plant Physiol.">
        <title>RTM3, which controls long-distance movement of potyviruses, is a member of a new plant gene family encoding a meprin and TRAF homology domain-containing protein.</title>
        <authorList>
            <person name="Cosson P."/>
            <person name="Sofer L."/>
            <person name="Le Q.H."/>
            <person name="Leger V."/>
            <person name="Schurdi-Levraud V."/>
            <person name="Whitham S.A."/>
            <person name="Yamamoto M.L."/>
            <person name="Gopalan S."/>
            <person name="Le Gall O."/>
            <person name="Candresse T."/>
            <person name="Carrington J.C."/>
            <person name="Revers F."/>
        </authorList>
    </citation>
    <scope>GENE FAMILY</scope>
</reference>
<dbReference type="EMBL" id="AC002534">
    <property type="protein sequence ID" value="AAB70027.1"/>
    <property type="status" value="ALT_SEQ"/>
    <property type="molecule type" value="Genomic_DNA"/>
</dbReference>
<dbReference type="EMBL" id="CP002686">
    <property type="protein sequence ID" value="AEE77955.2"/>
    <property type="molecule type" value="Genomic_DNA"/>
</dbReference>
<dbReference type="RefSeq" id="NP_190066.3">
    <property type="nucleotide sequence ID" value="NM_114349.3"/>
</dbReference>
<dbReference type="SMR" id="F4J4A1"/>
<dbReference type="FunCoup" id="F4J4A1">
    <property type="interactions" value="39"/>
</dbReference>
<dbReference type="STRING" id="3702.F4J4A1"/>
<dbReference type="PaxDb" id="3702-AT3G44800.1"/>
<dbReference type="EnsemblPlants" id="AT3G44800.1">
    <property type="protein sequence ID" value="AT3G44800.1"/>
    <property type="gene ID" value="AT3G44800"/>
</dbReference>
<dbReference type="GeneID" id="823613"/>
<dbReference type="Gramene" id="AT3G44800.1">
    <property type="protein sequence ID" value="AT3G44800.1"/>
    <property type="gene ID" value="AT3G44800"/>
</dbReference>
<dbReference type="KEGG" id="ath:AT3G44800"/>
<dbReference type="Araport" id="AT3G44800"/>
<dbReference type="TAIR" id="AT3G44800"/>
<dbReference type="eggNOG" id="KOG1987">
    <property type="taxonomic scope" value="Eukaryota"/>
</dbReference>
<dbReference type="HOGENOM" id="CLU_580560_0_0_1"/>
<dbReference type="InParanoid" id="F4J4A1"/>
<dbReference type="OMA" id="CRRRIRF"/>
<dbReference type="PRO" id="PR:F4J4A1"/>
<dbReference type="Proteomes" id="UP000006548">
    <property type="component" value="Chromosome 3"/>
</dbReference>
<dbReference type="ExpressionAtlas" id="F4J4A1">
    <property type="expression patterns" value="baseline and differential"/>
</dbReference>
<dbReference type="CDD" id="cd00121">
    <property type="entry name" value="MATH"/>
    <property type="match status" value="1"/>
</dbReference>
<dbReference type="Gene3D" id="2.60.210.10">
    <property type="entry name" value="Apoptosis, Tumor Necrosis Factor Receptor Associated Protein 2, Chain A"/>
    <property type="match status" value="1"/>
</dbReference>
<dbReference type="InterPro" id="IPR050804">
    <property type="entry name" value="MATH-CC_domain_protein"/>
</dbReference>
<dbReference type="InterPro" id="IPR002083">
    <property type="entry name" value="MATH/TRAF_dom"/>
</dbReference>
<dbReference type="InterPro" id="IPR008974">
    <property type="entry name" value="TRAF-like"/>
</dbReference>
<dbReference type="PANTHER" id="PTHR46236">
    <property type="entry name" value="TRAF-LIKE SUPERFAMILY PROTEIN"/>
    <property type="match status" value="1"/>
</dbReference>
<dbReference type="PANTHER" id="PTHR46236:SF11">
    <property type="entry name" value="TRAF-LIKE SUPERFAMILY PROTEIN"/>
    <property type="match status" value="1"/>
</dbReference>
<dbReference type="Pfam" id="PF22486">
    <property type="entry name" value="MATH_2"/>
    <property type="match status" value="1"/>
</dbReference>
<dbReference type="SMART" id="SM00061">
    <property type="entry name" value="MATH"/>
    <property type="match status" value="1"/>
</dbReference>
<dbReference type="SUPFAM" id="SSF49599">
    <property type="entry name" value="TRAF domain-like"/>
    <property type="match status" value="1"/>
</dbReference>
<dbReference type="PROSITE" id="PS50144">
    <property type="entry name" value="MATH"/>
    <property type="match status" value="1"/>
</dbReference>
<feature type="chain" id="PRO_0000429291" description="MATH domain and coiled-coil domain-containing protein At3g44800">
    <location>
        <begin position="1"/>
        <end position="342"/>
    </location>
</feature>
<feature type="domain" description="MATH" evidence="2">
    <location>
        <begin position="3"/>
        <end position="129"/>
    </location>
</feature>
<feature type="coiled-coil region" evidence="1">
    <location>
        <begin position="253"/>
        <end position="327"/>
    </location>
</feature>
<evidence type="ECO:0000255" key="1"/>
<evidence type="ECO:0000255" key="2">
    <source>
        <dbReference type="PROSITE-ProRule" id="PRU00129"/>
    </source>
</evidence>
<evidence type="ECO:0000305" key="3"/>
<organism>
    <name type="scientific">Arabidopsis thaliana</name>
    <name type="common">Mouse-ear cress</name>
    <dbReference type="NCBI Taxonomy" id="3702"/>
    <lineage>
        <taxon>Eukaryota</taxon>
        <taxon>Viridiplantae</taxon>
        <taxon>Streptophyta</taxon>
        <taxon>Embryophyta</taxon>
        <taxon>Tracheophyta</taxon>
        <taxon>Spermatophyta</taxon>
        <taxon>Magnoliopsida</taxon>
        <taxon>eudicotyledons</taxon>
        <taxon>Gunneridae</taxon>
        <taxon>Pentapetalae</taxon>
        <taxon>rosids</taxon>
        <taxon>malvids</taxon>
        <taxon>Brassicales</taxon>
        <taxon>Brassicaceae</taxon>
        <taxon>Camelineae</taxon>
        <taxon>Arabidopsis</taxon>
    </lineage>
</organism>